<keyword id="KW-0274">FAD</keyword>
<keyword id="KW-0285">Flavoprotein</keyword>
<keyword id="KW-0560">Oxidoreductase</keyword>
<protein>
    <recommendedName>
        <fullName evidence="1">N-methyl-L-tryptophan oxidase</fullName>
        <shortName evidence="1">MTOX</shortName>
        <ecNumber evidence="1">1.5.3.-</ecNumber>
    </recommendedName>
</protein>
<reference key="1">
    <citation type="journal article" date="2011" name="J. Bacteriol.">
        <title>Comparative genomics of 28 Salmonella enterica isolates: evidence for CRISPR-mediated adaptive sublineage evolution.</title>
        <authorList>
            <person name="Fricke W.F."/>
            <person name="Mammel M.K."/>
            <person name="McDermott P.F."/>
            <person name="Tartera C."/>
            <person name="White D.G."/>
            <person name="Leclerc J.E."/>
            <person name="Ravel J."/>
            <person name="Cebula T.A."/>
        </authorList>
    </citation>
    <scope>NUCLEOTIDE SEQUENCE [LARGE SCALE GENOMIC DNA]</scope>
    <source>
        <strain>SL483</strain>
    </source>
</reference>
<accession>B5F947</accession>
<dbReference type="EC" id="1.5.3.-" evidence="1"/>
<dbReference type="EMBL" id="CP001138">
    <property type="protein sequence ID" value="ACH48615.1"/>
    <property type="molecule type" value="Genomic_DNA"/>
</dbReference>
<dbReference type="RefSeq" id="WP_000872774.1">
    <property type="nucleotide sequence ID" value="NC_011149.1"/>
</dbReference>
<dbReference type="SMR" id="B5F947"/>
<dbReference type="KEGG" id="sea:SeAg_B2028"/>
<dbReference type="HOGENOM" id="CLU_007884_2_1_6"/>
<dbReference type="Proteomes" id="UP000008819">
    <property type="component" value="Chromosome"/>
</dbReference>
<dbReference type="GO" id="GO:0005829">
    <property type="term" value="C:cytosol"/>
    <property type="evidence" value="ECO:0007669"/>
    <property type="project" value="TreeGrafter"/>
</dbReference>
<dbReference type="GO" id="GO:0050660">
    <property type="term" value="F:flavin adenine dinucleotide binding"/>
    <property type="evidence" value="ECO:0007669"/>
    <property type="project" value="InterPro"/>
</dbReference>
<dbReference type="GO" id="GO:0050131">
    <property type="term" value="F:N-methyl-L-amino-acid oxidase activity"/>
    <property type="evidence" value="ECO:0007669"/>
    <property type="project" value="InterPro"/>
</dbReference>
<dbReference type="GO" id="GO:0008115">
    <property type="term" value="F:sarcosine oxidase activity"/>
    <property type="evidence" value="ECO:0007669"/>
    <property type="project" value="TreeGrafter"/>
</dbReference>
<dbReference type="Gene3D" id="3.30.9.10">
    <property type="entry name" value="D-Amino Acid Oxidase, subunit A, domain 2"/>
    <property type="match status" value="1"/>
</dbReference>
<dbReference type="Gene3D" id="3.50.50.60">
    <property type="entry name" value="FAD/NAD(P)-binding domain"/>
    <property type="match status" value="1"/>
</dbReference>
<dbReference type="HAMAP" id="MF_00515">
    <property type="entry name" value="MTOX"/>
    <property type="match status" value="1"/>
</dbReference>
<dbReference type="InterPro" id="IPR006076">
    <property type="entry name" value="FAD-dep_OxRdtase"/>
</dbReference>
<dbReference type="InterPro" id="IPR036188">
    <property type="entry name" value="FAD/NAD-bd_sf"/>
</dbReference>
<dbReference type="InterPro" id="IPR023493">
    <property type="entry name" value="Me_Trp_Oxase_MTOX"/>
</dbReference>
<dbReference type="InterPro" id="IPR045170">
    <property type="entry name" value="MTOX"/>
</dbReference>
<dbReference type="NCBIfam" id="NF008425">
    <property type="entry name" value="PRK11259.1"/>
    <property type="match status" value="1"/>
</dbReference>
<dbReference type="PANTHER" id="PTHR10961:SF7">
    <property type="entry name" value="FAD DEPENDENT OXIDOREDUCTASE DOMAIN-CONTAINING PROTEIN"/>
    <property type="match status" value="1"/>
</dbReference>
<dbReference type="PANTHER" id="PTHR10961">
    <property type="entry name" value="PEROXISOMAL SARCOSINE OXIDASE"/>
    <property type="match status" value="1"/>
</dbReference>
<dbReference type="Pfam" id="PF01266">
    <property type="entry name" value="DAO"/>
    <property type="match status" value="1"/>
</dbReference>
<dbReference type="SUPFAM" id="SSF54373">
    <property type="entry name" value="FAD-linked reductases, C-terminal domain"/>
    <property type="match status" value="1"/>
</dbReference>
<dbReference type="SUPFAM" id="SSF51905">
    <property type="entry name" value="FAD/NAD(P)-binding domain"/>
    <property type="match status" value="1"/>
</dbReference>
<organism>
    <name type="scientific">Salmonella agona (strain SL483)</name>
    <dbReference type="NCBI Taxonomy" id="454166"/>
    <lineage>
        <taxon>Bacteria</taxon>
        <taxon>Pseudomonadati</taxon>
        <taxon>Pseudomonadota</taxon>
        <taxon>Gammaproteobacteria</taxon>
        <taxon>Enterobacterales</taxon>
        <taxon>Enterobacteriaceae</taxon>
        <taxon>Salmonella</taxon>
    </lineage>
</organism>
<feature type="chain" id="PRO_1000127443" description="N-methyl-L-tryptophan oxidase">
    <location>
        <begin position="1"/>
        <end position="372"/>
    </location>
</feature>
<feature type="binding site" evidence="1">
    <location>
        <begin position="4"/>
        <end position="34"/>
    </location>
    <ligand>
        <name>FAD</name>
        <dbReference type="ChEBI" id="CHEBI:57692"/>
    </ligand>
</feature>
<feature type="modified residue" description="S-8alpha-FAD cysteine" evidence="1">
    <location>
        <position position="307"/>
    </location>
</feature>
<proteinExistence type="inferred from homology"/>
<sequence length="372" mass="40648">MKYDLIIIGSGSVGAAAGYYATRAGLKVLMTDAHMPPHQQGSHHGDTRLIRHAYGEGEKYVPLVLRAQTLWDELSTHNEEPIFVRSGVVNLGPADSAFLANVARSAQQWQLNVERLDATALMTRWPEIRVPDNYIGLFEADSGFLRSELAITTWLRLAREAGCAQLFNSPVSHIHHDDNGVTIETSEGSYHASKALISAGTWVKALVPELPVQPVRKVFAWFKADGRYSTKNRFPAFTGEMPNGDQYYGFPAENDELKIGKHNGGQLIQAPEERKPFAAVASDGAEAFPFLRNVLPGIGGCLHGAACTYDNSPDEDFIIDTLPGHENTLVITGLSGHGFKFAPVLGEIAADFALGKTPSFDLTPFRLSRFSQ</sequence>
<name>MTOX_SALA4</name>
<gene>
    <name evidence="1" type="primary">solA</name>
    <name type="ordered locus">SeAg_B2028</name>
</gene>
<comment type="function">
    <text evidence="1">Catalyzes the oxidative demethylation of N-methyl-L-tryptophan.</text>
</comment>
<comment type="catalytic activity">
    <reaction evidence="1">
        <text>N(alpha)-methyl-L-tryptophan + O2 + H2O = L-tryptophan + formaldehyde + H2O2</text>
        <dbReference type="Rhea" id="RHEA:28006"/>
        <dbReference type="ChEBI" id="CHEBI:15377"/>
        <dbReference type="ChEBI" id="CHEBI:15379"/>
        <dbReference type="ChEBI" id="CHEBI:16240"/>
        <dbReference type="ChEBI" id="CHEBI:16842"/>
        <dbReference type="ChEBI" id="CHEBI:57283"/>
        <dbReference type="ChEBI" id="CHEBI:57912"/>
    </reaction>
</comment>
<comment type="cofactor">
    <cofactor evidence="1">
        <name>FAD</name>
        <dbReference type="ChEBI" id="CHEBI:57692"/>
    </cofactor>
    <text evidence="1">Binds 1 FAD per subunit.</text>
</comment>
<comment type="subunit">
    <text evidence="1">Monomer.</text>
</comment>
<comment type="similarity">
    <text evidence="1">Belongs to the MSOX/MTOX family. MTOX subfamily.</text>
</comment>
<evidence type="ECO:0000255" key="1">
    <source>
        <dbReference type="HAMAP-Rule" id="MF_00515"/>
    </source>
</evidence>